<reference key="1">
    <citation type="submission" date="2005-03" db="EMBL/GenBank/DDBJ databases">
        <title>Annotation of the Saccharomyces cerevisiae RM11-1a genome.</title>
        <authorList>
            <consortium name="The Broad Institute Genome Sequencing Platform"/>
            <person name="Birren B.W."/>
            <person name="Lander E.S."/>
            <person name="Galagan J.E."/>
            <person name="Nusbaum C."/>
            <person name="Devon K."/>
            <person name="Cuomo C."/>
            <person name="Jaffe D.B."/>
            <person name="Butler J."/>
            <person name="Alvarez P."/>
            <person name="Gnerre S."/>
            <person name="Grabherr M."/>
            <person name="Kleber M."/>
            <person name="Mauceli E.W."/>
            <person name="Brockman W."/>
            <person name="MacCallum I.A."/>
            <person name="Rounsley S."/>
            <person name="Young S.K."/>
            <person name="LaButti K."/>
            <person name="Pushparaj V."/>
            <person name="DeCaprio D."/>
            <person name="Crawford M."/>
            <person name="Koehrsen M."/>
            <person name="Engels R."/>
            <person name="Montgomery P."/>
            <person name="Pearson M."/>
            <person name="Howarth C."/>
            <person name="Larson L."/>
            <person name="Luoma S."/>
            <person name="White J."/>
            <person name="O'Leary S."/>
            <person name="Kodira C.D."/>
            <person name="Zeng Q."/>
            <person name="Yandava C."/>
            <person name="Alvarado L."/>
            <person name="Pratt S."/>
            <person name="Kruglyak L."/>
        </authorList>
    </citation>
    <scope>NUCLEOTIDE SEQUENCE [LARGE SCALE GENOMIC DNA]</scope>
    <source>
        <strain>RM11-1a</strain>
    </source>
</reference>
<organism>
    <name type="scientific">Saccharomyces cerevisiae (strain RM11-1a)</name>
    <name type="common">Baker's yeast</name>
    <dbReference type="NCBI Taxonomy" id="285006"/>
    <lineage>
        <taxon>Eukaryota</taxon>
        <taxon>Fungi</taxon>
        <taxon>Dikarya</taxon>
        <taxon>Ascomycota</taxon>
        <taxon>Saccharomycotina</taxon>
        <taxon>Saccharomycetes</taxon>
        <taxon>Saccharomycetales</taxon>
        <taxon>Saccharomycetaceae</taxon>
        <taxon>Saccharomyces</taxon>
    </lineage>
</organism>
<feature type="chain" id="PRO_0000399760" description="Autophagy-related protein 32">
    <location>
        <begin position="1"/>
        <end position="529"/>
    </location>
</feature>
<feature type="transmembrane region" description="Helical" evidence="3">
    <location>
        <begin position="389"/>
        <end position="411"/>
    </location>
</feature>
<feature type="region of interest" description="Disordered" evidence="4">
    <location>
        <begin position="1"/>
        <end position="41"/>
    </location>
</feature>
<feature type="region of interest" description="Disordered" evidence="4">
    <location>
        <begin position="345"/>
        <end position="381"/>
    </location>
</feature>
<feature type="compositionally biased region" description="Basic and acidic residues" evidence="4">
    <location>
        <begin position="1"/>
        <end position="11"/>
    </location>
</feature>
<feature type="compositionally biased region" description="Low complexity" evidence="4">
    <location>
        <begin position="12"/>
        <end position="24"/>
    </location>
</feature>
<feature type="compositionally biased region" description="Polar residues" evidence="4">
    <location>
        <begin position="25"/>
        <end position="34"/>
    </location>
</feature>
<feature type="compositionally biased region" description="Basic residues" evidence="4">
    <location>
        <begin position="370"/>
        <end position="381"/>
    </location>
</feature>
<feature type="modified residue" description="Phosphoserine" evidence="2">
    <location>
        <position position="114"/>
    </location>
</feature>
<feature type="modified residue" description="Phosphoserine" evidence="2">
    <location>
        <position position="119"/>
    </location>
</feature>
<evidence type="ECO:0000250" key="1"/>
<evidence type="ECO:0000250" key="2">
    <source>
        <dbReference type="UniProtKB" id="P40458"/>
    </source>
</evidence>
<evidence type="ECO:0000255" key="3"/>
<evidence type="ECO:0000256" key="4">
    <source>
        <dbReference type="SAM" id="MobiDB-lite"/>
    </source>
</evidence>
<evidence type="ECO:0000305" key="5"/>
<comment type="function">
    <text evidence="1">Mitophagy-specific receptor that recruits the autophagic machinery to mitochondria and regulates selective degradation of mitochondria. Mitophagy contributes to regulate mitochondrial quantity and quality by eliminating the mitochondria to a basal level to fulfill cellular energy requirements and preventing excess ROS production. Recruits ATG11 to the surface of mitochondria. Also promotes autophagy-dependent peroxisome degradation (By similarity).</text>
</comment>
<comment type="subunit">
    <text evidence="1">interacts with ATG8 and ATG11.</text>
</comment>
<comment type="subcellular location">
    <subcellularLocation>
        <location evidence="1">Mitochondrion outer membrane</location>
        <topology evidence="1">Single-pass membrane protein</topology>
    </subcellularLocation>
    <subcellularLocation>
        <location evidence="1">Vacuole membrane</location>
        <topology evidence="1">Single-pass membrane protein</topology>
    </subcellularLocation>
    <subcellularLocation>
        <location evidence="1">Preautophagosomal structure membrane</location>
        <topology evidence="1">Single-pass membrane protein</topology>
    </subcellularLocation>
    <text evidence="1">Is recruited to the preautophagosomal structure during mitophagy and imported into the vacuole along with mitochondria during starvation.</text>
</comment>
<comment type="PTM">
    <text evidence="1">Phosphorylation of Ser-114 and Ser-119 are critically important for mitophagy and for the ATG11-ATG32 interaction. Phosphorylation depends on both HOG1 and PBS2.</text>
</comment>
<comment type="similarity">
    <text evidence="5">Belongs to the ATG32 family.</text>
</comment>
<sequence length="529" mass="58938">MVLEYQQREGKGSSSKSMPPDSSSTTIHTCSEAQTGEDKGLLDPHLSVLELLSKTGHSPSPMGQNLVTSIDISGNHNVNDSISGSWQAIQPLDLGASFIPERCSSQTTNGSILSSSDTSEEEQELLQAPAADIINIIKQGQEGANVVSPSHPFKQLQKIISLPLPGKEKTPFNEQDDDGDEDEAFEEDSVTITKSLTSSTNSFVMPKLSLTQKNPVFRLLILGRTGSSFYQSIPKEYQSLFELPKYHDSATFPQYTGIVIIFQELREMVSLLNRIVQYSPGKPVIPICQPGQVIQVKNVLKSFLRNKLVKLLFPPVVVTNKRDLKKMFQRLQDLSLEYGEDVNEEDNDDEAIHTKSRSYCRNKKAENSKKKSPKSNKKPKRKKQKFFTSWFTWGISITIGISFGCCVTYFVTAAYEHQTVKSLSLRPSILASLLSLDSSSDTINTPATASPSSTEQFLWFDKGTLQINFHSDGFIMKSLTIIKETWGKMNTFVLHALSKPLKFLENLNKSSEFSIDESNRILALGYILL</sequence>
<gene>
    <name type="primary">ATG32</name>
    <name type="synonym">ECM17</name>
    <name type="ORF">SCRG_05318</name>
</gene>
<dbReference type="EMBL" id="CH408055">
    <property type="protein sequence ID" value="EDV09624.1"/>
    <property type="molecule type" value="Genomic_DNA"/>
</dbReference>
<dbReference type="SMR" id="B3LTZ3"/>
<dbReference type="HOGENOM" id="CLU_039418_0_0_1"/>
<dbReference type="OrthoDB" id="37969at4893"/>
<dbReference type="Proteomes" id="UP000008335">
    <property type="component" value="Unassembled WGS sequence"/>
</dbReference>
<dbReference type="GO" id="GO:0005741">
    <property type="term" value="C:mitochondrial outer membrane"/>
    <property type="evidence" value="ECO:0007669"/>
    <property type="project" value="UniProtKB-SubCell"/>
</dbReference>
<dbReference type="GO" id="GO:0034045">
    <property type="term" value="C:phagophore assembly site membrane"/>
    <property type="evidence" value="ECO:0007669"/>
    <property type="project" value="UniProtKB-SubCell"/>
</dbReference>
<dbReference type="GO" id="GO:0005774">
    <property type="term" value="C:vacuolar membrane"/>
    <property type="evidence" value="ECO:0007669"/>
    <property type="project" value="UniProtKB-SubCell"/>
</dbReference>
<dbReference type="GO" id="GO:0006914">
    <property type="term" value="P:autophagy"/>
    <property type="evidence" value="ECO:0007669"/>
    <property type="project" value="UniProtKB-KW"/>
</dbReference>
<dbReference type="CDD" id="cd19929">
    <property type="entry name" value="psREC_Atg32"/>
    <property type="match status" value="1"/>
</dbReference>
<proteinExistence type="inferred from homology"/>
<name>ATG32_YEAS1</name>
<protein>
    <recommendedName>
        <fullName>Autophagy-related protein 32</fullName>
    </recommendedName>
    <alternativeName>
        <fullName>Extracellular mutant protein 37</fullName>
    </alternativeName>
</protein>
<keyword id="KW-0072">Autophagy</keyword>
<keyword id="KW-0472">Membrane</keyword>
<keyword id="KW-0496">Mitochondrion</keyword>
<keyword id="KW-1000">Mitochondrion outer membrane</keyword>
<keyword id="KW-0597">Phosphoprotein</keyword>
<keyword id="KW-0812">Transmembrane</keyword>
<keyword id="KW-1133">Transmembrane helix</keyword>
<keyword id="KW-0926">Vacuole</keyword>
<accession>B3LTZ3</accession>